<feature type="chain" id="PRO_0000332203" description="Myeloid-associated differentiation marker homolog">
    <location>
        <begin position="1"/>
        <end position="307"/>
    </location>
</feature>
<feature type="transmembrane region" description="Helical" evidence="1">
    <location>
        <begin position="19"/>
        <end position="39"/>
    </location>
</feature>
<feature type="transmembrane region" description="Helical" evidence="1">
    <location>
        <begin position="51"/>
        <end position="71"/>
    </location>
</feature>
<feature type="transmembrane region" description="Helical" evidence="1">
    <location>
        <begin position="85"/>
        <end position="105"/>
    </location>
</feature>
<feature type="transmembrane region" description="Helical" evidence="1">
    <location>
        <begin position="123"/>
        <end position="143"/>
    </location>
</feature>
<feature type="transmembrane region" description="Helical" evidence="1">
    <location>
        <begin position="156"/>
        <end position="176"/>
    </location>
</feature>
<feature type="transmembrane region" description="Helical" evidence="1">
    <location>
        <begin position="190"/>
        <end position="210"/>
    </location>
</feature>
<feature type="transmembrane region" description="Helical" evidence="1">
    <location>
        <begin position="228"/>
        <end position="248"/>
    </location>
</feature>
<feature type="transmembrane region" description="Helical" evidence="1">
    <location>
        <begin position="278"/>
        <end position="298"/>
    </location>
</feature>
<feature type="domain" description="MARVEL 1" evidence="2">
    <location>
        <begin position="15"/>
        <end position="148"/>
    </location>
</feature>
<feature type="domain" description="MARVEL 2" evidence="2">
    <location>
        <begin position="153"/>
        <end position="304"/>
    </location>
</feature>
<organism>
    <name type="scientific">Xenopus laevis</name>
    <name type="common">African clawed frog</name>
    <dbReference type="NCBI Taxonomy" id="8355"/>
    <lineage>
        <taxon>Eukaryota</taxon>
        <taxon>Metazoa</taxon>
        <taxon>Chordata</taxon>
        <taxon>Craniata</taxon>
        <taxon>Vertebrata</taxon>
        <taxon>Euteleostomi</taxon>
        <taxon>Amphibia</taxon>
        <taxon>Batrachia</taxon>
        <taxon>Anura</taxon>
        <taxon>Pipoidea</taxon>
        <taxon>Pipidae</taxon>
        <taxon>Xenopodinae</taxon>
        <taxon>Xenopus</taxon>
        <taxon>Xenopus</taxon>
    </lineage>
</organism>
<comment type="subcellular location">
    <subcellularLocation>
        <location evidence="3">Membrane</location>
        <topology evidence="3">Multi-pass membrane protein</topology>
    </subcellularLocation>
</comment>
<comment type="similarity">
    <text evidence="3">Belongs to the MAL family.</text>
</comment>
<sequence length="307" mass="34208">MPVQHRTTVVGNTSTLKSPVGILRILEVIFACVTFSLVVHTGRWTGRIGDLCMFCWCFCFAVSLVILIVEFTGVQNRMPVSWKNFPITFAMYAVLMCLSATVIYPLQYLEDKAYSSEVRNYQIVAIVFSCLTTLAYIIEVSLTRAKPGEVTGYMATTPGLLKVLETFIACIIFVFISDPPLYDRHDALKWCLAVYCICFILSIVVIILCVGECTGWLPCAFNKFLSGYALLAVLMYASAMIIWPIFSFDRKHGGTASRPSNCRSSPGNLYAVCEWDKMVAVAVLTAVNLIAYVMDLVYSARLIFITV</sequence>
<keyword id="KW-0472">Membrane</keyword>
<keyword id="KW-1185">Reference proteome</keyword>
<keyword id="KW-0677">Repeat</keyword>
<keyword id="KW-0812">Transmembrane</keyword>
<keyword id="KW-1133">Transmembrane helix</keyword>
<dbReference type="EMBL" id="BC082817">
    <property type="protein sequence ID" value="AAH82817.1"/>
    <property type="molecule type" value="mRNA"/>
</dbReference>
<dbReference type="RefSeq" id="NP_001088041.1">
    <property type="nucleotide sequence ID" value="NM_001094572.1"/>
</dbReference>
<dbReference type="SMR" id="Q63ZU3"/>
<dbReference type="DNASU" id="494734"/>
<dbReference type="GeneID" id="494734"/>
<dbReference type="KEGG" id="xla:494734"/>
<dbReference type="AGR" id="Xenbase:XB-GENE-6255325"/>
<dbReference type="CTD" id="494734"/>
<dbReference type="Xenbase" id="XB-GENE-6255325">
    <property type="gene designation" value="myadm.L"/>
</dbReference>
<dbReference type="OMA" id="GLCTWDK"/>
<dbReference type="OrthoDB" id="8737882at2759"/>
<dbReference type="Proteomes" id="UP000186698">
    <property type="component" value="Chromosome 7L"/>
</dbReference>
<dbReference type="Bgee" id="494734">
    <property type="expression patterns" value="Expressed in lung and 17 other cell types or tissues"/>
</dbReference>
<dbReference type="GO" id="GO:0016020">
    <property type="term" value="C:membrane"/>
    <property type="evidence" value="ECO:0007669"/>
    <property type="project" value="UniProtKB-SubCell"/>
</dbReference>
<dbReference type="InterPro" id="IPR008253">
    <property type="entry name" value="Marvel"/>
</dbReference>
<dbReference type="InterPro" id="IPR047123">
    <property type="entry name" value="MYADM-like"/>
</dbReference>
<dbReference type="PANTHER" id="PTHR17068:SF3">
    <property type="entry name" value="MYELOID-ASSOCIATED DIFFERENTIATION MARKER"/>
    <property type="match status" value="1"/>
</dbReference>
<dbReference type="PANTHER" id="PTHR17068">
    <property type="entry name" value="MYELOID-ASSOCIATED DIFFERENTIATION MARKER MYADM FAMILY MEMBER"/>
    <property type="match status" value="1"/>
</dbReference>
<dbReference type="Pfam" id="PF01284">
    <property type="entry name" value="MARVEL"/>
    <property type="match status" value="2"/>
</dbReference>
<dbReference type="PROSITE" id="PS51225">
    <property type="entry name" value="MARVEL"/>
    <property type="match status" value="2"/>
</dbReference>
<name>MYADM_XENLA</name>
<proteinExistence type="evidence at transcript level"/>
<evidence type="ECO:0000255" key="1"/>
<evidence type="ECO:0000255" key="2">
    <source>
        <dbReference type="PROSITE-ProRule" id="PRU00581"/>
    </source>
</evidence>
<evidence type="ECO:0000305" key="3"/>
<reference key="1">
    <citation type="submission" date="2004-09" db="EMBL/GenBank/DDBJ databases">
        <authorList>
            <consortium name="NIH - Xenopus Gene Collection (XGC) project"/>
        </authorList>
    </citation>
    <scope>NUCLEOTIDE SEQUENCE [LARGE SCALE MRNA]</scope>
    <source>
        <tissue>Lung</tissue>
    </source>
</reference>
<gene>
    <name type="primary">myadm</name>
</gene>
<protein>
    <recommendedName>
        <fullName>Myeloid-associated differentiation marker homolog</fullName>
    </recommendedName>
</protein>
<accession>Q63ZU3</accession>